<dbReference type="EC" id="2.3.1.180" evidence="1"/>
<dbReference type="EMBL" id="CP000728">
    <property type="protein sequence ID" value="ABS41342.1"/>
    <property type="molecule type" value="Genomic_DNA"/>
</dbReference>
<dbReference type="RefSeq" id="WP_012101211.1">
    <property type="nucleotide sequence ID" value="NC_009699.1"/>
</dbReference>
<dbReference type="SMR" id="A7GJJ9"/>
<dbReference type="KEGG" id="cbf:CLI_3829"/>
<dbReference type="HOGENOM" id="CLU_039592_3_1_9"/>
<dbReference type="UniPathway" id="UPA00094"/>
<dbReference type="Proteomes" id="UP000002410">
    <property type="component" value="Chromosome"/>
</dbReference>
<dbReference type="GO" id="GO:0005737">
    <property type="term" value="C:cytoplasm"/>
    <property type="evidence" value="ECO:0007669"/>
    <property type="project" value="UniProtKB-SubCell"/>
</dbReference>
<dbReference type="GO" id="GO:0004315">
    <property type="term" value="F:3-oxoacyl-[acyl-carrier-protein] synthase activity"/>
    <property type="evidence" value="ECO:0007669"/>
    <property type="project" value="InterPro"/>
</dbReference>
<dbReference type="GO" id="GO:0033818">
    <property type="term" value="F:beta-ketoacyl-acyl-carrier-protein synthase III activity"/>
    <property type="evidence" value="ECO:0007669"/>
    <property type="project" value="UniProtKB-UniRule"/>
</dbReference>
<dbReference type="GO" id="GO:0006633">
    <property type="term" value="P:fatty acid biosynthetic process"/>
    <property type="evidence" value="ECO:0007669"/>
    <property type="project" value="UniProtKB-UniRule"/>
</dbReference>
<dbReference type="GO" id="GO:0044550">
    <property type="term" value="P:secondary metabolite biosynthetic process"/>
    <property type="evidence" value="ECO:0007669"/>
    <property type="project" value="TreeGrafter"/>
</dbReference>
<dbReference type="CDD" id="cd00830">
    <property type="entry name" value="KAS_III"/>
    <property type="match status" value="1"/>
</dbReference>
<dbReference type="FunFam" id="3.40.47.10:FF:000004">
    <property type="entry name" value="3-oxoacyl-[acyl-carrier-protein] synthase 3"/>
    <property type="match status" value="1"/>
</dbReference>
<dbReference type="Gene3D" id="3.40.47.10">
    <property type="match status" value="1"/>
</dbReference>
<dbReference type="HAMAP" id="MF_01815">
    <property type="entry name" value="FabH"/>
    <property type="match status" value="1"/>
</dbReference>
<dbReference type="InterPro" id="IPR013747">
    <property type="entry name" value="ACP_syn_III_C"/>
</dbReference>
<dbReference type="InterPro" id="IPR013751">
    <property type="entry name" value="ACP_syn_III_N"/>
</dbReference>
<dbReference type="InterPro" id="IPR004655">
    <property type="entry name" value="FabH"/>
</dbReference>
<dbReference type="InterPro" id="IPR016039">
    <property type="entry name" value="Thiolase-like"/>
</dbReference>
<dbReference type="NCBIfam" id="TIGR00747">
    <property type="entry name" value="fabH"/>
    <property type="match status" value="1"/>
</dbReference>
<dbReference type="NCBIfam" id="NF006829">
    <property type="entry name" value="PRK09352.1"/>
    <property type="match status" value="1"/>
</dbReference>
<dbReference type="PANTHER" id="PTHR34069">
    <property type="entry name" value="3-OXOACYL-[ACYL-CARRIER-PROTEIN] SYNTHASE 3"/>
    <property type="match status" value="1"/>
</dbReference>
<dbReference type="PANTHER" id="PTHR34069:SF2">
    <property type="entry name" value="BETA-KETOACYL-[ACYL-CARRIER-PROTEIN] SYNTHASE III"/>
    <property type="match status" value="1"/>
</dbReference>
<dbReference type="Pfam" id="PF08545">
    <property type="entry name" value="ACP_syn_III"/>
    <property type="match status" value="1"/>
</dbReference>
<dbReference type="Pfam" id="PF08541">
    <property type="entry name" value="ACP_syn_III_C"/>
    <property type="match status" value="1"/>
</dbReference>
<dbReference type="SUPFAM" id="SSF53901">
    <property type="entry name" value="Thiolase-like"/>
    <property type="match status" value="1"/>
</dbReference>
<organism>
    <name type="scientific">Clostridium botulinum (strain Langeland / NCTC 10281 / Type F)</name>
    <dbReference type="NCBI Taxonomy" id="441772"/>
    <lineage>
        <taxon>Bacteria</taxon>
        <taxon>Bacillati</taxon>
        <taxon>Bacillota</taxon>
        <taxon>Clostridia</taxon>
        <taxon>Eubacteriales</taxon>
        <taxon>Clostridiaceae</taxon>
        <taxon>Clostridium</taxon>
    </lineage>
</organism>
<keyword id="KW-0012">Acyltransferase</keyword>
<keyword id="KW-0963">Cytoplasm</keyword>
<keyword id="KW-0275">Fatty acid biosynthesis</keyword>
<keyword id="KW-0276">Fatty acid metabolism</keyword>
<keyword id="KW-0444">Lipid biosynthesis</keyword>
<keyword id="KW-0443">Lipid metabolism</keyword>
<keyword id="KW-0511">Multifunctional enzyme</keyword>
<keyword id="KW-0808">Transferase</keyword>
<reference key="1">
    <citation type="submission" date="2007-06" db="EMBL/GenBank/DDBJ databases">
        <authorList>
            <person name="Brinkac L.M."/>
            <person name="Daugherty S."/>
            <person name="Dodson R.J."/>
            <person name="Madupu R."/>
            <person name="Brown J.L."/>
            <person name="Bruce D."/>
            <person name="Detter C."/>
            <person name="Munk C."/>
            <person name="Smith L.A."/>
            <person name="Smith T.J."/>
            <person name="White O."/>
            <person name="Brettin T.S."/>
        </authorList>
    </citation>
    <scope>NUCLEOTIDE SEQUENCE [LARGE SCALE GENOMIC DNA]</scope>
    <source>
        <strain>Langeland / NCTC 10281 / Type F</strain>
    </source>
</reference>
<evidence type="ECO:0000255" key="1">
    <source>
        <dbReference type="HAMAP-Rule" id="MF_01815"/>
    </source>
</evidence>
<proteinExistence type="inferred from homology"/>
<comment type="function">
    <text evidence="1">Catalyzes the condensation reaction of fatty acid synthesis by the addition to an acyl acceptor of two carbons from malonyl-ACP. Catalyzes the first condensation reaction which initiates fatty acid synthesis and may therefore play a role in governing the total rate of fatty acid production. Possesses both acetoacetyl-ACP synthase and acetyl transacylase activities. Its substrate specificity determines the biosynthesis of branched-chain and/or straight-chain of fatty acids.</text>
</comment>
<comment type="catalytic activity">
    <reaction evidence="1">
        <text>malonyl-[ACP] + acetyl-CoA + H(+) = 3-oxobutanoyl-[ACP] + CO2 + CoA</text>
        <dbReference type="Rhea" id="RHEA:12080"/>
        <dbReference type="Rhea" id="RHEA-COMP:9623"/>
        <dbReference type="Rhea" id="RHEA-COMP:9625"/>
        <dbReference type="ChEBI" id="CHEBI:15378"/>
        <dbReference type="ChEBI" id="CHEBI:16526"/>
        <dbReference type="ChEBI" id="CHEBI:57287"/>
        <dbReference type="ChEBI" id="CHEBI:57288"/>
        <dbReference type="ChEBI" id="CHEBI:78449"/>
        <dbReference type="ChEBI" id="CHEBI:78450"/>
        <dbReference type="EC" id="2.3.1.180"/>
    </reaction>
</comment>
<comment type="pathway">
    <text evidence="1">Lipid metabolism; fatty acid biosynthesis.</text>
</comment>
<comment type="subunit">
    <text evidence="1">Homodimer.</text>
</comment>
<comment type="subcellular location">
    <subcellularLocation>
        <location evidence="1">Cytoplasm</location>
    </subcellularLocation>
</comment>
<comment type="domain">
    <text evidence="1">The last Arg residue of the ACP-binding site is essential for the weak association between ACP/AcpP and FabH.</text>
</comment>
<comment type="similarity">
    <text evidence="1">Belongs to the thiolase-like superfamily. FabH family.</text>
</comment>
<name>FABH_CLOBL</name>
<sequence>MSNISVIGTGSYVPNNIITNDFLSTIVDTSDEWIRTRTGILERRISKGENTIYMATESAKEAIKNANIEANDLDLIIVATLTPDNFMPSTACSVQKEIGAINALCFDISAACSGFIYGLEIACSMLKNSFRNKALIIGAENLSKIVDWEDRNTCVLFGDGAGAAILSKTKEEGILEFHSGSNGLKGEHLTCGVLKANNTPNKNDRLEKNNFIKMNGKEIFRFAVGAMNETICNIQEKTKWDLNEVKYIISHQANSRIIEYTAKKLNTEKDKFYMNLDKYGNTSAASIPIALDEMNKRGLLNKQDKIILVGFGGGLTFGGVAIVWSI</sequence>
<feature type="chain" id="PRO_1000056345" description="Beta-ketoacyl-[acyl-carrier-protein] synthase III">
    <location>
        <begin position="1"/>
        <end position="326"/>
    </location>
</feature>
<feature type="region of interest" description="ACP-binding" evidence="1">
    <location>
        <begin position="252"/>
        <end position="256"/>
    </location>
</feature>
<feature type="active site" evidence="1">
    <location>
        <position position="112"/>
    </location>
</feature>
<feature type="active site" evidence="1">
    <location>
        <position position="251"/>
    </location>
</feature>
<feature type="active site" evidence="1">
    <location>
        <position position="281"/>
    </location>
</feature>
<accession>A7GJJ9</accession>
<gene>
    <name evidence="1" type="primary">fabH</name>
    <name type="ordered locus">CLI_3829</name>
</gene>
<protein>
    <recommendedName>
        <fullName evidence="1">Beta-ketoacyl-[acyl-carrier-protein] synthase III</fullName>
        <shortName evidence="1">Beta-ketoacyl-ACP synthase III</shortName>
        <shortName evidence="1">KAS III</shortName>
        <ecNumber evidence="1">2.3.1.180</ecNumber>
    </recommendedName>
    <alternativeName>
        <fullName evidence="1">3-oxoacyl-[acyl-carrier-protein] synthase 3</fullName>
    </alternativeName>
    <alternativeName>
        <fullName evidence="1">3-oxoacyl-[acyl-carrier-protein] synthase III</fullName>
    </alternativeName>
</protein>